<sequence>MEDEKFPISYVHGKFLVFDVQAVEVFRKNYHILGTLVGTLPQLPQQNVFLGLPMELSKEEAFYLIEKGISYIVDDTKVHKQLLENTTKDDVKQCLKKRQSLAYDQMIAAKKKENEKKIEIMKKLGRTLPLDPLNYDEHDSFDLSWIPVDTVTTRIAEKSSMNDDFHKEEDVFENLDINRYLMFKSLVDTGFYLNPGLRFGCQFVAYPGDALRYHSHYLVNSYKWDQEIPVLFLIGGGRLGTAVKKTWLIGGSNDRNINMNGEKSKEELLLLPVRHFSIEWAGFG</sequence>
<dbReference type="EC" id="4.6.1.16"/>
<dbReference type="EMBL" id="CU329671">
    <property type="protein sequence ID" value="CAA19575.1"/>
    <property type="molecule type" value="Genomic_DNA"/>
</dbReference>
<dbReference type="PIR" id="T39813">
    <property type="entry name" value="T39813"/>
</dbReference>
<dbReference type="RefSeq" id="NP_596163.1">
    <property type="nucleotide sequence ID" value="NM_001022083.2"/>
</dbReference>
<dbReference type="SMR" id="O60156"/>
<dbReference type="BioGRID" id="277117">
    <property type="interactions" value="1"/>
</dbReference>
<dbReference type="FunCoup" id="O60156">
    <property type="interactions" value="54"/>
</dbReference>
<dbReference type="STRING" id="284812.O60156"/>
<dbReference type="PaxDb" id="4896-SPBC19C7.07c.1"/>
<dbReference type="EnsemblFungi" id="SPBC19C7.07c.1">
    <property type="protein sequence ID" value="SPBC19C7.07c.1:pep"/>
    <property type="gene ID" value="SPBC19C7.07c"/>
</dbReference>
<dbReference type="GeneID" id="2540591"/>
<dbReference type="KEGG" id="spo:2540591"/>
<dbReference type="PomBase" id="SPBC19C7.07c">
    <property type="gene designation" value="sen34"/>
</dbReference>
<dbReference type="VEuPathDB" id="FungiDB:SPBC19C7.07c"/>
<dbReference type="eggNOG" id="KOG4133">
    <property type="taxonomic scope" value="Eukaryota"/>
</dbReference>
<dbReference type="HOGENOM" id="CLU_049366_0_0_1"/>
<dbReference type="InParanoid" id="O60156"/>
<dbReference type="OMA" id="RTFSLEW"/>
<dbReference type="PhylomeDB" id="O60156"/>
<dbReference type="PRO" id="PR:O60156"/>
<dbReference type="Proteomes" id="UP000002485">
    <property type="component" value="Chromosome II"/>
</dbReference>
<dbReference type="GO" id="GO:0000214">
    <property type="term" value="C:tRNA-intron endonuclease complex"/>
    <property type="evidence" value="ECO:0000266"/>
    <property type="project" value="PomBase"/>
</dbReference>
<dbReference type="GO" id="GO:0016829">
    <property type="term" value="F:lyase activity"/>
    <property type="evidence" value="ECO:0007669"/>
    <property type="project" value="UniProtKB-KW"/>
</dbReference>
<dbReference type="GO" id="GO:0003676">
    <property type="term" value="F:nucleic acid binding"/>
    <property type="evidence" value="ECO:0007669"/>
    <property type="project" value="InterPro"/>
</dbReference>
<dbReference type="GO" id="GO:0000213">
    <property type="term" value="F:tRNA-intron endonuclease activity"/>
    <property type="evidence" value="ECO:0000318"/>
    <property type="project" value="GO_Central"/>
</dbReference>
<dbReference type="GO" id="GO:0000379">
    <property type="term" value="P:tRNA-type intron splice site recognition and cleavage"/>
    <property type="evidence" value="ECO:0000318"/>
    <property type="project" value="GO_Central"/>
</dbReference>
<dbReference type="CDD" id="cd22363">
    <property type="entry name" value="tRNA-intron_lyase_C"/>
    <property type="match status" value="1"/>
</dbReference>
<dbReference type="FunFam" id="3.40.1350.10:FF:000008">
    <property type="entry name" value="tRNA-splicing endonuclease subunit Sen34"/>
    <property type="match status" value="1"/>
</dbReference>
<dbReference type="Gene3D" id="3.40.1350.10">
    <property type="match status" value="1"/>
</dbReference>
<dbReference type="InterPro" id="IPR011856">
    <property type="entry name" value="tRNA_endonuc-like_dom_sf"/>
</dbReference>
<dbReference type="InterPro" id="IPR036167">
    <property type="entry name" value="tRNA_intron_Endo_cat-like_sf"/>
</dbReference>
<dbReference type="InterPro" id="IPR006677">
    <property type="entry name" value="tRNA_intron_Endonuc_cat-like"/>
</dbReference>
<dbReference type="InterPro" id="IPR006676">
    <property type="entry name" value="tRNA_splic"/>
</dbReference>
<dbReference type="InterPro" id="IPR016690">
    <property type="entry name" value="tRNA_splic_SEN34"/>
</dbReference>
<dbReference type="NCBIfam" id="TIGR00324">
    <property type="entry name" value="endA"/>
    <property type="match status" value="1"/>
</dbReference>
<dbReference type="PANTHER" id="PTHR13070:SF0">
    <property type="entry name" value="TRNA-SPLICING ENDONUCLEASE SUBUNIT SEN34"/>
    <property type="match status" value="1"/>
</dbReference>
<dbReference type="PANTHER" id="PTHR13070">
    <property type="entry name" value="TRNA-SPLICING ENDONUCLEASE SUBUNIT SEN34-RELATED"/>
    <property type="match status" value="1"/>
</dbReference>
<dbReference type="Pfam" id="PF01974">
    <property type="entry name" value="tRNA_int_endo"/>
    <property type="match status" value="1"/>
</dbReference>
<dbReference type="PIRSF" id="PIRSF017250">
    <property type="entry name" value="tRNA_splic_SEN34"/>
    <property type="match status" value="1"/>
</dbReference>
<dbReference type="SUPFAM" id="SSF53032">
    <property type="entry name" value="tRNA-intron endonuclease catalytic domain-like"/>
    <property type="match status" value="1"/>
</dbReference>
<name>SEN34_SCHPO</name>
<reference key="1">
    <citation type="journal article" date="2002" name="Nature">
        <title>The genome sequence of Schizosaccharomyces pombe.</title>
        <authorList>
            <person name="Wood V."/>
            <person name="Gwilliam R."/>
            <person name="Rajandream M.A."/>
            <person name="Lyne M.H."/>
            <person name="Lyne R."/>
            <person name="Stewart A."/>
            <person name="Sgouros J.G."/>
            <person name="Peat N."/>
            <person name="Hayles J."/>
            <person name="Baker S.G."/>
            <person name="Basham D."/>
            <person name="Bowman S."/>
            <person name="Brooks K."/>
            <person name="Brown D."/>
            <person name="Brown S."/>
            <person name="Chillingworth T."/>
            <person name="Churcher C.M."/>
            <person name="Collins M."/>
            <person name="Connor R."/>
            <person name="Cronin A."/>
            <person name="Davis P."/>
            <person name="Feltwell T."/>
            <person name="Fraser A."/>
            <person name="Gentles S."/>
            <person name="Goble A."/>
            <person name="Hamlin N."/>
            <person name="Harris D.E."/>
            <person name="Hidalgo J."/>
            <person name="Hodgson G."/>
            <person name="Holroyd S."/>
            <person name="Hornsby T."/>
            <person name="Howarth S."/>
            <person name="Huckle E.J."/>
            <person name="Hunt S."/>
            <person name="Jagels K."/>
            <person name="James K.D."/>
            <person name="Jones L."/>
            <person name="Jones M."/>
            <person name="Leather S."/>
            <person name="McDonald S."/>
            <person name="McLean J."/>
            <person name="Mooney P."/>
            <person name="Moule S."/>
            <person name="Mungall K.L."/>
            <person name="Murphy L.D."/>
            <person name="Niblett D."/>
            <person name="Odell C."/>
            <person name="Oliver K."/>
            <person name="O'Neil S."/>
            <person name="Pearson D."/>
            <person name="Quail M.A."/>
            <person name="Rabbinowitsch E."/>
            <person name="Rutherford K.M."/>
            <person name="Rutter S."/>
            <person name="Saunders D."/>
            <person name="Seeger K."/>
            <person name="Sharp S."/>
            <person name="Skelton J."/>
            <person name="Simmonds M.N."/>
            <person name="Squares R."/>
            <person name="Squares S."/>
            <person name="Stevens K."/>
            <person name="Taylor K."/>
            <person name="Taylor R.G."/>
            <person name="Tivey A."/>
            <person name="Walsh S.V."/>
            <person name="Warren T."/>
            <person name="Whitehead S."/>
            <person name="Woodward J.R."/>
            <person name="Volckaert G."/>
            <person name="Aert R."/>
            <person name="Robben J."/>
            <person name="Grymonprez B."/>
            <person name="Weltjens I."/>
            <person name="Vanstreels E."/>
            <person name="Rieger M."/>
            <person name="Schaefer M."/>
            <person name="Mueller-Auer S."/>
            <person name="Gabel C."/>
            <person name="Fuchs M."/>
            <person name="Duesterhoeft A."/>
            <person name="Fritzc C."/>
            <person name="Holzer E."/>
            <person name="Moestl D."/>
            <person name="Hilbert H."/>
            <person name="Borzym K."/>
            <person name="Langer I."/>
            <person name="Beck A."/>
            <person name="Lehrach H."/>
            <person name="Reinhardt R."/>
            <person name="Pohl T.M."/>
            <person name="Eger P."/>
            <person name="Zimmermann W."/>
            <person name="Wedler H."/>
            <person name="Wambutt R."/>
            <person name="Purnelle B."/>
            <person name="Goffeau A."/>
            <person name="Cadieu E."/>
            <person name="Dreano S."/>
            <person name="Gloux S."/>
            <person name="Lelaure V."/>
            <person name="Mottier S."/>
            <person name="Galibert F."/>
            <person name="Aves S.J."/>
            <person name="Xiang Z."/>
            <person name="Hunt C."/>
            <person name="Moore K."/>
            <person name="Hurst S.M."/>
            <person name="Lucas M."/>
            <person name="Rochet M."/>
            <person name="Gaillardin C."/>
            <person name="Tallada V.A."/>
            <person name="Garzon A."/>
            <person name="Thode G."/>
            <person name="Daga R.R."/>
            <person name="Cruzado L."/>
            <person name="Jimenez J."/>
            <person name="Sanchez M."/>
            <person name="del Rey F."/>
            <person name="Benito J."/>
            <person name="Dominguez A."/>
            <person name="Revuelta J.L."/>
            <person name="Moreno S."/>
            <person name="Armstrong J."/>
            <person name="Forsburg S.L."/>
            <person name="Cerutti L."/>
            <person name="Lowe T."/>
            <person name="McCombie W.R."/>
            <person name="Paulsen I."/>
            <person name="Potashkin J."/>
            <person name="Shpakovski G.V."/>
            <person name="Ussery D."/>
            <person name="Barrell B.G."/>
            <person name="Nurse P."/>
        </authorList>
    </citation>
    <scope>NUCLEOTIDE SEQUENCE [LARGE SCALE GENOMIC DNA]</scope>
    <source>
        <strain>972 / ATCC 24843</strain>
    </source>
</reference>
<gene>
    <name type="primary">sen34</name>
    <name type="ORF">SPBC19C7.07c</name>
</gene>
<accession>O60156</accession>
<comment type="function">
    <text evidence="1">Constitutes one of the two catalytic subunit of the tRNA-splicing endonuclease complex, a complex responsible for identification and cleavage of the splice sites in pre-tRNA. It cleaves pre-tRNA at the 5'- and 3'-splice sites to release the intron. The products are an intron and two tRNA half-molecules bearing 2',3'-cyclic phosphate and 5'-OH termini. There are no conserved sequences at the splice sites, but the intron is invariably located at the same site in the gene, placing the splice sites an invariant distance from the constant structural features of the tRNA body. It probably carries the active site for 3'-splice site cleavage (By similarity).</text>
</comment>
<comment type="catalytic activity">
    <reaction>
        <text>pretRNA = a 3'-half-tRNA molecule with a 5'-OH end + a 5'-half-tRNA molecule with a 2',3'-cyclic phosphate end + an intron with a 2',3'-cyclic phosphate and a 5'-hydroxyl terminus.</text>
        <dbReference type="EC" id="4.6.1.16"/>
    </reaction>
</comment>
<comment type="subunit">
    <text evidence="1">Heterotetramer composed of sen2, sen15, sen34 and sen54. Interacts directly with sen15 (By similarity).</text>
</comment>
<comment type="similarity">
    <text evidence="2">Belongs to the tRNA-intron endonuclease family.</text>
</comment>
<protein>
    <recommendedName>
        <fullName>Probable tRNA-splicing endonuclease subunit sen34</fullName>
        <ecNumber>4.6.1.16</ecNumber>
    </recommendedName>
    <alternativeName>
        <fullName>tRNA-intron endonuclease sen34</fullName>
    </alternativeName>
</protein>
<keyword id="KW-0456">Lyase</keyword>
<keyword id="KW-1185">Reference proteome</keyword>
<keyword id="KW-0819">tRNA processing</keyword>
<organism>
    <name type="scientific">Schizosaccharomyces pombe (strain 972 / ATCC 24843)</name>
    <name type="common">Fission yeast</name>
    <dbReference type="NCBI Taxonomy" id="284812"/>
    <lineage>
        <taxon>Eukaryota</taxon>
        <taxon>Fungi</taxon>
        <taxon>Dikarya</taxon>
        <taxon>Ascomycota</taxon>
        <taxon>Taphrinomycotina</taxon>
        <taxon>Schizosaccharomycetes</taxon>
        <taxon>Schizosaccharomycetales</taxon>
        <taxon>Schizosaccharomycetaceae</taxon>
        <taxon>Schizosaccharomyces</taxon>
    </lineage>
</organism>
<proteinExistence type="inferred from homology"/>
<feature type="chain" id="PRO_0000109467" description="Probable tRNA-splicing endonuclease subunit sen34">
    <location>
        <begin position="1"/>
        <end position="284"/>
    </location>
</feature>
<feature type="active site" evidence="1">
    <location>
        <position position="206"/>
    </location>
</feature>
<feature type="active site" evidence="1">
    <location>
        <position position="214"/>
    </location>
</feature>
<feature type="active site" evidence="1">
    <location>
        <position position="245"/>
    </location>
</feature>
<evidence type="ECO:0000250" key="1"/>
<evidence type="ECO:0000305" key="2"/>